<gene>
    <name evidence="1" type="primary">ndhK</name>
    <name type="ordered locus">PMT9312_0295</name>
</gene>
<reference key="1">
    <citation type="journal article" date="2006" name="Science">
        <title>Genomic islands and the ecology and evolution of Prochlorococcus.</title>
        <authorList>
            <person name="Coleman M.L."/>
            <person name="Sullivan M.B."/>
            <person name="Martiny A.C."/>
            <person name="Steglich C."/>
            <person name="Barry K."/>
            <person name="Delong E.F."/>
            <person name="Chisholm S.W."/>
        </authorList>
    </citation>
    <scope>NUCLEOTIDE SEQUENCE [LARGE SCALE GENOMIC DNA]</scope>
    <source>
        <strain>MIT 9312</strain>
    </source>
</reference>
<feature type="chain" id="PRO_0000358454" description="NAD(P)H-quinone oxidoreductase subunit K">
    <location>
        <begin position="1"/>
        <end position="244"/>
    </location>
</feature>
<feature type="region of interest" description="Disordered" evidence="2">
    <location>
        <begin position="221"/>
        <end position="244"/>
    </location>
</feature>
<feature type="compositionally biased region" description="Basic and acidic residues" evidence="2">
    <location>
        <begin position="221"/>
        <end position="236"/>
    </location>
</feature>
<feature type="binding site" evidence="1">
    <location>
        <position position="60"/>
    </location>
    <ligand>
        <name>[4Fe-4S] cluster</name>
        <dbReference type="ChEBI" id="CHEBI:49883"/>
    </ligand>
</feature>
<feature type="binding site" evidence="1">
    <location>
        <position position="61"/>
    </location>
    <ligand>
        <name>[4Fe-4S] cluster</name>
        <dbReference type="ChEBI" id="CHEBI:49883"/>
    </ligand>
</feature>
<feature type="binding site" evidence="1">
    <location>
        <position position="125"/>
    </location>
    <ligand>
        <name>[4Fe-4S] cluster</name>
        <dbReference type="ChEBI" id="CHEBI:49883"/>
    </ligand>
</feature>
<feature type="binding site" evidence="1">
    <location>
        <position position="156"/>
    </location>
    <ligand>
        <name>[4Fe-4S] cluster</name>
        <dbReference type="ChEBI" id="CHEBI:49883"/>
    </ligand>
</feature>
<organism>
    <name type="scientific">Prochlorococcus marinus (strain MIT 9312)</name>
    <dbReference type="NCBI Taxonomy" id="74546"/>
    <lineage>
        <taxon>Bacteria</taxon>
        <taxon>Bacillati</taxon>
        <taxon>Cyanobacteriota</taxon>
        <taxon>Cyanophyceae</taxon>
        <taxon>Synechococcales</taxon>
        <taxon>Prochlorococcaceae</taxon>
        <taxon>Prochlorococcus</taxon>
    </lineage>
</organism>
<name>NDHK_PROM9</name>
<accession>Q31CN9</accession>
<evidence type="ECO:0000255" key="1">
    <source>
        <dbReference type="HAMAP-Rule" id="MF_01356"/>
    </source>
</evidence>
<evidence type="ECO:0000256" key="2">
    <source>
        <dbReference type="SAM" id="MobiDB-lite"/>
    </source>
</evidence>
<comment type="function">
    <text evidence="1">NDH-1 shuttles electrons from an unknown electron donor, via FMN and iron-sulfur (Fe-S) centers, to quinones in the respiratory and/or the photosynthetic chain. The immediate electron acceptor for the enzyme in this species is believed to be plastoquinone. Couples the redox reaction to proton translocation, and thus conserves the redox energy in a proton gradient. Cyanobacterial NDH-1 also plays a role in inorganic carbon-concentration.</text>
</comment>
<comment type="catalytic activity">
    <reaction evidence="1">
        <text>a plastoquinone + NADH + (n+1) H(+)(in) = a plastoquinol + NAD(+) + n H(+)(out)</text>
        <dbReference type="Rhea" id="RHEA:42608"/>
        <dbReference type="Rhea" id="RHEA-COMP:9561"/>
        <dbReference type="Rhea" id="RHEA-COMP:9562"/>
        <dbReference type="ChEBI" id="CHEBI:15378"/>
        <dbReference type="ChEBI" id="CHEBI:17757"/>
        <dbReference type="ChEBI" id="CHEBI:57540"/>
        <dbReference type="ChEBI" id="CHEBI:57945"/>
        <dbReference type="ChEBI" id="CHEBI:62192"/>
    </reaction>
</comment>
<comment type="catalytic activity">
    <reaction evidence="1">
        <text>a plastoquinone + NADPH + (n+1) H(+)(in) = a plastoquinol + NADP(+) + n H(+)(out)</text>
        <dbReference type="Rhea" id="RHEA:42612"/>
        <dbReference type="Rhea" id="RHEA-COMP:9561"/>
        <dbReference type="Rhea" id="RHEA-COMP:9562"/>
        <dbReference type="ChEBI" id="CHEBI:15378"/>
        <dbReference type="ChEBI" id="CHEBI:17757"/>
        <dbReference type="ChEBI" id="CHEBI:57783"/>
        <dbReference type="ChEBI" id="CHEBI:58349"/>
        <dbReference type="ChEBI" id="CHEBI:62192"/>
    </reaction>
</comment>
<comment type="cofactor">
    <cofactor evidence="1">
        <name>[4Fe-4S] cluster</name>
        <dbReference type="ChEBI" id="CHEBI:49883"/>
    </cofactor>
    <text evidence="1">Binds 1 [4Fe-4S] cluster.</text>
</comment>
<comment type="subunit">
    <text evidence="1">NDH-1 can be composed of about 15 different subunits; different subcomplexes with different compositions have been identified which probably have different functions.</text>
</comment>
<comment type="subcellular location">
    <subcellularLocation>
        <location evidence="1">Cellular thylakoid membrane</location>
        <topology evidence="1">Peripheral membrane protein</topology>
        <orientation evidence="1">Cytoplasmic side</orientation>
    </subcellularLocation>
</comment>
<comment type="similarity">
    <text evidence="1">Belongs to the complex I 20 kDa subunit family.</text>
</comment>
<dbReference type="EC" id="7.1.1.-" evidence="1"/>
<dbReference type="EMBL" id="CP000111">
    <property type="protein sequence ID" value="ABB49356.1"/>
    <property type="molecule type" value="Genomic_DNA"/>
</dbReference>
<dbReference type="RefSeq" id="WP_011375858.1">
    <property type="nucleotide sequence ID" value="NC_007577.1"/>
</dbReference>
<dbReference type="SMR" id="Q31CN9"/>
<dbReference type="STRING" id="74546.PMT9312_0295"/>
<dbReference type="KEGG" id="pmi:PMT9312_0295"/>
<dbReference type="eggNOG" id="COG0377">
    <property type="taxonomic scope" value="Bacteria"/>
</dbReference>
<dbReference type="HOGENOM" id="CLU_055737_2_0_3"/>
<dbReference type="OrthoDB" id="9786737at2"/>
<dbReference type="Proteomes" id="UP000002715">
    <property type="component" value="Chromosome"/>
</dbReference>
<dbReference type="GO" id="GO:0031676">
    <property type="term" value="C:plasma membrane-derived thylakoid membrane"/>
    <property type="evidence" value="ECO:0007669"/>
    <property type="project" value="UniProtKB-SubCell"/>
</dbReference>
<dbReference type="GO" id="GO:0045271">
    <property type="term" value="C:respiratory chain complex I"/>
    <property type="evidence" value="ECO:0007669"/>
    <property type="project" value="TreeGrafter"/>
</dbReference>
<dbReference type="GO" id="GO:0051539">
    <property type="term" value="F:4 iron, 4 sulfur cluster binding"/>
    <property type="evidence" value="ECO:0007669"/>
    <property type="project" value="UniProtKB-KW"/>
</dbReference>
<dbReference type="GO" id="GO:0005506">
    <property type="term" value="F:iron ion binding"/>
    <property type="evidence" value="ECO:0007669"/>
    <property type="project" value="UniProtKB-UniRule"/>
</dbReference>
<dbReference type="GO" id="GO:0008137">
    <property type="term" value="F:NADH dehydrogenase (ubiquinone) activity"/>
    <property type="evidence" value="ECO:0007669"/>
    <property type="project" value="InterPro"/>
</dbReference>
<dbReference type="GO" id="GO:0048038">
    <property type="term" value="F:quinone binding"/>
    <property type="evidence" value="ECO:0007669"/>
    <property type="project" value="UniProtKB-KW"/>
</dbReference>
<dbReference type="GO" id="GO:0009060">
    <property type="term" value="P:aerobic respiration"/>
    <property type="evidence" value="ECO:0007669"/>
    <property type="project" value="TreeGrafter"/>
</dbReference>
<dbReference type="GO" id="GO:0015990">
    <property type="term" value="P:electron transport coupled proton transport"/>
    <property type="evidence" value="ECO:0007669"/>
    <property type="project" value="TreeGrafter"/>
</dbReference>
<dbReference type="GO" id="GO:0019684">
    <property type="term" value="P:photosynthesis, light reaction"/>
    <property type="evidence" value="ECO:0007669"/>
    <property type="project" value="UniProtKB-UniRule"/>
</dbReference>
<dbReference type="FunFam" id="3.40.50.12280:FF:000003">
    <property type="entry name" value="NAD(P)H-quinone oxidoreductase subunit K, chloroplastic"/>
    <property type="match status" value="1"/>
</dbReference>
<dbReference type="Gene3D" id="3.40.50.12280">
    <property type="match status" value="1"/>
</dbReference>
<dbReference type="HAMAP" id="MF_01356">
    <property type="entry name" value="NDH1_NuoB"/>
    <property type="match status" value="1"/>
</dbReference>
<dbReference type="InterPro" id="IPR006137">
    <property type="entry name" value="NADH_UbQ_OxRdtase-like_20kDa"/>
</dbReference>
<dbReference type="InterPro" id="IPR006138">
    <property type="entry name" value="NADH_UQ_OxRdtase_20Kd_su"/>
</dbReference>
<dbReference type="NCBIfam" id="TIGR01957">
    <property type="entry name" value="nuoB_fam"/>
    <property type="match status" value="1"/>
</dbReference>
<dbReference type="NCBIfam" id="NF005012">
    <property type="entry name" value="PRK06411.1"/>
    <property type="match status" value="1"/>
</dbReference>
<dbReference type="PANTHER" id="PTHR11995">
    <property type="entry name" value="NADH DEHYDROGENASE"/>
    <property type="match status" value="1"/>
</dbReference>
<dbReference type="PANTHER" id="PTHR11995:SF14">
    <property type="entry name" value="NADH DEHYDROGENASE [UBIQUINONE] IRON-SULFUR PROTEIN 7, MITOCHONDRIAL"/>
    <property type="match status" value="1"/>
</dbReference>
<dbReference type="Pfam" id="PF01058">
    <property type="entry name" value="Oxidored_q6"/>
    <property type="match status" value="1"/>
</dbReference>
<dbReference type="SUPFAM" id="SSF56770">
    <property type="entry name" value="HydA/Nqo6-like"/>
    <property type="match status" value="1"/>
</dbReference>
<dbReference type="PROSITE" id="PS01150">
    <property type="entry name" value="COMPLEX1_20K"/>
    <property type="match status" value="1"/>
</dbReference>
<proteinExistence type="inferred from homology"/>
<protein>
    <recommendedName>
        <fullName evidence="1">NAD(P)H-quinone oxidoreductase subunit K</fullName>
        <ecNumber evidence="1">7.1.1.-</ecNumber>
    </recommendedName>
    <alternativeName>
        <fullName evidence="1">NAD(P)H dehydrogenase I subunit K</fullName>
    </alternativeName>
    <alternativeName>
        <fullName evidence="1">NDH-1 subunit K</fullName>
        <shortName evidence="1">NDH-K</shortName>
    </alternativeName>
</protein>
<keyword id="KW-0004">4Fe-4S</keyword>
<keyword id="KW-0408">Iron</keyword>
<keyword id="KW-0411">Iron-sulfur</keyword>
<keyword id="KW-0472">Membrane</keyword>
<keyword id="KW-0479">Metal-binding</keyword>
<keyword id="KW-0520">NAD</keyword>
<keyword id="KW-0521">NADP</keyword>
<keyword id="KW-0618">Plastoquinone</keyword>
<keyword id="KW-0874">Quinone</keyword>
<keyword id="KW-0793">Thylakoid</keyword>
<keyword id="KW-1278">Translocase</keyword>
<keyword id="KW-0813">Transport</keyword>
<sequence length="244" mass="27342">MNPQLSPKAIREIREGTCNPLGAPQVTTDLSENIILTSLDDLHNWARLSSLWPLLYGTACCFIEFAALIGSRFDFDRFGLVPRSSPRQADLLIVAGTVTMKMAPALVRLYEQMPEPKYVIAMGACTITGGMFSADSTTAVRGVDKLIPVDLYLPGCPPRPEAIFDAVIKLRKKVGNESILEREKTEQTHRYITYKHEMNLVFSQNTGEYLNKTSTNVFPSSKKEKITELPENREQTEIINSEEE</sequence>